<sequence>MAAKIRQNDEVIVLAGKDKNKRGKVTKVLPNGKVIVEGINLITKHEKPVPALGKAGGLVKKEAAIDVSNVAIFNPTTNKADRVGFRFEDNKKVRFFKSNNEII</sequence>
<accession>Q7VKE4</accession>
<comment type="function">
    <text evidence="1">One of two assembly initiator proteins, it binds directly to the 5'-end of the 23S rRNA, where it nucleates assembly of the 50S subunit.</text>
</comment>
<comment type="function">
    <text evidence="1">One of the proteins that surrounds the polypeptide exit tunnel on the outside of the subunit.</text>
</comment>
<comment type="subunit">
    <text evidence="1">Part of the 50S ribosomal subunit.</text>
</comment>
<comment type="similarity">
    <text evidence="1">Belongs to the universal ribosomal protein uL24 family.</text>
</comment>
<feature type="chain" id="PRO_0000130661" description="Large ribosomal subunit protein uL24">
    <location>
        <begin position="1"/>
        <end position="103"/>
    </location>
</feature>
<evidence type="ECO:0000255" key="1">
    <source>
        <dbReference type="HAMAP-Rule" id="MF_01326"/>
    </source>
</evidence>
<evidence type="ECO:0000305" key="2"/>
<reference key="1">
    <citation type="submission" date="2003-06" db="EMBL/GenBank/DDBJ databases">
        <title>The complete genome sequence of Haemophilus ducreyi.</title>
        <authorList>
            <person name="Munson R.S. Jr."/>
            <person name="Ray W.C."/>
            <person name="Mahairas G."/>
            <person name="Sabo P."/>
            <person name="Mungur R."/>
            <person name="Johnson L."/>
            <person name="Nguyen D."/>
            <person name="Wang J."/>
            <person name="Forst C."/>
            <person name="Hood L."/>
        </authorList>
    </citation>
    <scope>NUCLEOTIDE SEQUENCE [LARGE SCALE GENOMIC DNA]</scope>
    <source>
        <strain>35000HP / ATCC 700724</strain>
    </source>
</reference>
<protein>
    <recommendedName>
        <fullName evidence="1">Large ribosomal subunit protein uL24</fullName>
    </recommendedName>
    <alternativeName>
        <fullName evidence="2">50S ribosomal protein L24</fullName>
    </alternativeName>
</protein>
<name>RL24_HAEDU</name>
<proteinExistence type="inferred from homology"/>
<dbReference type="EMBL" id="AE017143">
    <property type="protein sequence ID" value="AAP96685.1"/>
    <property type="molecule type" value="Genomic_DNA"/>
</dbReference>
<dbReference type="RefSeq" id="WP_010945711.1">
    <property type="nucleotide sequence ID" value="NC_002940.2"/>
</dbReference>
<dbReference type="SMR" id="Q7VKE4"/>
<dbReference type="STRING" id="233412.HD_1967"/>
<dbReference type="GeneID" id="60733554"/>
<dbReference type="KEGG" id="hdu:HD_1967"/>
<dbReference type="eggNOG" id="COG0198">
    <property type="taxonomic scope" value="Bacteria"/>
</dbReference>
<dbReference type="HOGENOM" id="CLU_093315_2_2_6"/>
<dbReference type="OrthoDB" id="9807419at2"/>
<dbReference type="Proteomes" id="UP000001022">
    <property type="component" value="Chromosome"/>
</dbReference>
<dbReference type="GO" id="GO:1990904">
    <property type="term" value="C:ribonucleoprotein complex"/>
    <property type="evidence" value="ECO:0007669"/>
    <property type="project" value="UniProtKB-KW"/>
</dbReference>
<dbReference type="GO" id="GO:0005840">
    <property type="term" value="C:ribosome"/>
    <property type="evidence" value="ECO:0007669"/>
    <property type="project" value="UniProtKB-KW"/>
</dbReference>
<dbReference type="GO" id="GO:0019843">
    <property type="term" value="F:rRNA binding"/>
    <property type="evidence" value="ECO:0007669"/>
    <property type="project" value="UniProtKB-UniRule"/>
</dbReference>
<dbReference type="GO" id="GO:0003735">
    <property type="term" value="F:structural constituent of ribosome"/>
    <property type="evidence" value="ECO:0007669"/>
    <property type="project" value="InterPro"/>
</dbReference>
<dbReference type="GO" id="GO:0006412">
    <property type="term" value="P:translation"/>
    <property type="evidence" value="ECO:0007669"/>
    <property type="project" value="UniProtKB-UniRule"/>
</dbReference>
<dbReference type="CDD" id="cd06089">
    <property type="entry name" value="KOW_RPL26"/>
    <property type="match status" value="1"/>
</dbReference>
<dbReference type="FunFam" id="2.30.30.30:FF:000004">
    <property type="entry name" value="50S ribosomal protein L24"/>
    <property type="match status" value="1"/>
</dbReference>
<dbReference type="Gene3D" id="2.30.30.30">
    <property type="match status" value="1"/>
</dbReference>
<dbReference type="HAMAP" id="MF_01326_B">
    <property type="entry name" value="Ribosomal_uL24_B"/>
    <property type="match status" value="1"/>
</dbReference>
<dbReference type="InterPro" id="IPR005824">
    <property type="entry name" value="KOW"/>
</dbReference>
<dbReference type="InterPro" id="IPR014722">
    <property type="entry name" value="Rib_uL2_dom2"/>
</dbReference>
<dbReference type="InterPro" id="IPR003256">
    <property type="entry name" value="Ribosomal_uL24"/>
</dbReference>
<dbReference type="InterPro" id="IPR005825">
    <property type="entry name" value="Ribosomal_uL24_CS"/>
</dbReference>
<dbReference type="InterPro" id="IPR041988">
    <property type="entry name" value="Ribosomal_uL24_KOW"/>
</dbReference>
<dbReference type="InterPro" id="IPR008991">
    <property type="entry name" value="Translation_prot_SH3-like_sf"/>
</dbReference>
<dbReference type="NCBIfam" id="TIGR01079">
    <property type="entry name" value="rplX_bact"/>
    <property type="match status" value="1"/>
</dbReference>
<dbReference type="PANTHER" id="PTHR12903">
    <property type="entry name" value="MITOCHONDRIAL RIBOSOMAL PROTEIN L24"/>
    <property type="match status" value="1"/>
</dbReference>
<dbReference type="Pfam" id="PF00467">
    <property type="entry name" value="KOW"/>
    <property type="match status" value="1"/>
</dbReference>
<dbReference type="Pfam" id="PF17136">
    <property type="entry name" value="ribosomal_L24"/>
    <property type="match status" value="1"/>
</dbReference>
<dbReference type="SMART" id="SM00739">
    <property type="entry name" value="KOW"/>
    <property type="match status" value="1"/>
</dbReference>
<dbReference type="SUPFAM" id="SSF50104">
    <property type="entry name" value="Translation proteins SH3-like domain"/>
    <property type="match status" value="1"/>
</dbReference>
<dbReference type="PROSITE" id="PS01108">
    <property type="entry name" value="RIBOSOMAL_L24"/>
    <property type="match status" value="1"/>
</dbReference>
<organism>
    <name type="scientific">Haemophilus ducreyi (strain 35000HP / ATCC 700724)</name>
    <dbReference type="NCBI Taxonomy" id="233412"/>
    <lineage>
        <taxon>Bacteria</taxon>
        <taxon>Pseudomonadati</taxon>
        <taxon>Pseudomonadota</taxon>
        <taxon>Gammaproteobacteria</taxon>
        <taxon>Pasteurellales</taxon>
        <taxon>Pasteurellaceae</taxon>
        <taxon>Haemophilus</taxon>
    </lineage>
</organism>
<gene>
    <name evidence="1" type="primary">rplX</name>
    <name type="ordered locus">HD_1967</name>
</gene>
<keyword id="KW-1185">Reference proteome</keyword>
<keyword id="KW-0687">Ribonucleoprotein</keyword>
<keyword id="KW-0689">Ribosomal protein</keyword>
<keyword id="KW-0694">RNA-binding</keyword>
<keyword id="KW-0699">rRNA-binding</keyword>